<sequence>MRLHDLKPAEGARRERKRVGRGIGSGHGKTSGRGQKGQKARSGGGVRPGFEGGQMPLTRRLPKRGFTNIFKKEYAIVNVGTLEERFEDGAVITPEALIESGIIKDVKDGVKILGDGDLNKKFTVRAHKFSQSAIEKIQAVGGKAEVI</sequence>
<proteinExistence type="inferred from homology"/>
<reference key="1">
    <citation type="submission" date="2008-01" db="EMBL/GenBank/DDBJ databases">
        <title>Complete sequence of Thermoanaerobacter pseudethanolicus 39E.</title>
        <authorList>
            <person name="Copeland A."/>
            <person name="Lucas S."/>
            <person name="Lapidus A."/>
            <person name="Barry K."/>
            <person name="Glavina del Rio T."/>
            <person name="Dalin E."/>
            <person name="Tice H."/>
            <person name="Pitluck S."/>
            <person name="Bruce D."/>
            <person name="Goodwin L."/>
            <person name="Saunders E."/>
            <person name="Brettin T."/>
            <person name="Detter J.C."/>
            <person name="Han C."/>
            <person name="Schmutz J."/>
            <person name="Larimer F."/>
            <person name="Land M."/>
            <person name="Hauser L."/>
            <person name="Kyrpides N."/>
            <person name="Lykidis A."/>
            <person name="Hemme C."/>
            <person name="Fields M.W."/>
            <person name="He Z."/>
            <person name="Zhou J."/>
            <person name="Richardson P."/>
        </authorList>
    </citation>
    <scope>NUCLEOTIDE SEQUENCE [LARGE SCALE GENOMIC DNA]</scope>
    <source>
        <strain>ATCC 33223 / DSM 2355 / 39E</strain>
    </source>
</reference>
<keyword id="KW-1185">Reference proteome</keyword>
<keyword id="KW-0687">Ribonucleoprotein</keyword>
<keyword id="KW-0689">Ribosomal protein</keyword>
<keyword id="KW-0694">RNA-binding</keyword>
<keyword id="KW-0699">rRNA-binding</keyword>
<evidence type="ECO:0000255" key="1">
    <source>
        <dbReference type="HAMAP-Rule" id="MF_01341"/>
    </source>
</evidence>
<evidence type="ECO:0000256" key="2">
    <source>
        <dbReference type="SAM" id="MobiDB-lite"/>
    </source>
</evidence>
<evidence type="ECO:0000305" key="3"/>
<name>RL15_THEP3</name>
<protein>
    <recommendedName>
        <fullName evidence="1">Large ribosomal subunit protein uL15</fullName>
    </recommendedName>
    <alternativeName>
        <fullName evidence="3">50S ribosomal protein L15</fullName>
    </alternativeName>
</protein>
<feature type="chain" id="PRO_1000142893" description="Large ribosomal subunit protein uL15">
    <location>
        <begin position="1"/>
        <end position="147"/>
    </location>
</feature>
<feature type="region of interest" description="Disordered" evidence="2">
    <location>
        <begin position="1"/>
        <end position="58"/>
    </location>
</feature>
<feature type="compositionally biased region" description="Basic and acidic residues" evidence="2">
    <location>
        <begin position="1"/>
        <end position="13"/>
    </location>
</feature>
<feature type="compositionally biased region" description="Gly residues" evidence="2">
    <location>
        <begin position="21"/>
        <end position="35"/>
    </location>
</feature>
<feature type="compositionally biased region" description="Gly residues" evidence="2">
    <location>
        <begin position="42"/>
        <end position="52"/>
    </location>
</feature>
<accession>B0KCL8</accession>
<comment type="function">
    <text evidence="1">Binds to the 23S rRNA.</text>
</comment>
<comment type="subunit">
    <text evidence="1">Part of the 50S ribosomal subunit.</text>
</comment>
<comment type="similarity">
    <text evidence="1">Belongs to the universal ribosomal protein uL15 family.</text>
</comment>
<dbReference type="EMBL" id="CP000924">
    <property type="protein sequence ID" value="ABY94061.1"/>
    <property type="molecule type" value="Genomic_DNA"/>
</dbReference>
<dbReference type="RefSeq" id="WP_003868578.1">
    <property type="nucleotide sequence ID" value="NC_010321.1"/>
</dbReference>
<dbReference type="SMR" id="B0KCL8"/>
<dbReference type="STRING" id="340099.Teth39_0392"/>
<dbReference type="KEGG" id="tpd:Teth39_0392"/>
<dbReference type="eggNOG" id="COG0200">
    <property type="taxonomic scope" value="Bacteria"/>
</dbReference>
<dbReference type="HOGENOM" id="CLU_055188_4_2_9"/>
<dbReference type="Proteomes" id="UP000002156">
    <property type="component" value="Chromosome"/>
</dbReference>
<dbReference type="GO" id="GO:0022625">
    <property type="term" value="C:cytosolic large ribosomal subunit"/>
    <property type="evidence" value="ECO:0007669"/>
    <property type="project" value="TreeGrafter"/>
</dbReference>
<dbReference type="GO" id="GO:0019843">
    <property type="term" value="F:rRNA binding"/>
    <property type="evidence" value="ECO:0007669"/>
    <property type="project" value="UniProtKB-UniRule"/>
</dbReference>
<dbReference type="GO" id="GO:0003735">
    <property type="term" value="F:structural constituent of ribosome"/>
    <property type="evidence" value="ECO:0007669"/>
    <property type="project" value="InterPro"/>
</dbReference>
<dbReference type="GO" id="GO:0006412">
    <property type="term" value="P:translation"/>
    <property type="evidence" value="ECO:0007669"/>
    <property type="project" value="UniProtKB-UniRule"/>
</dbReference>
<dbReference type="Gene3D" id="3.100.10.10">
    <property type="match status" value="1"/>
</dbReference>
<dbReference type="HAMAP" id="MF_01341">
    <property type="entry name" value="Ribosomal_uL15"/>
    <property type="match status" value="1"/>
</dbReference>
<dbReference type="InterPro" id="IPR030878">
    <property type="entry name" value="Ribosomal_uL15"/>
</dbReference>
<dbReference type="InterPro" id="IPR021131">
    <property type="entry name" value="Ribosomal_uL15/eL18"/>
</dbReference>
<dbReference type="InterPro" id="IPR036227">
    <property type="entry name" value="Ribosomal_uL15/eL18_sf"/>
</dbReference>
<dbReference type="InterPro" id="IPR005749">
    <property type="entry name" value="Ribosomal_uL15_bac-type"/>
</dbReference>
<dbReference type="InterPro" id="IPR001196">
    <property type="entry name" value="Ribosomal_uL15_CS"/>
</dbReference>
<dbReference type="NCBIfam" id="TIGR01071">
    <property type="entry name" value="rplO_bact"/>
    <property type="match status" value="1"/>
</dbReference>
<dbReference type="PANTHER" id="PTHR12934">
    <property type="entry name" value="50S RIBOSOMAL PROTEIN L15"/>
    <property type="match status" value="1"/>
</dbReference>
<dbReference type="PANTHER" id="PTHR12934:SF11">
    <property type="entry name" value="LARGE RIBOSOMAL SUBUNIT PROTEIN UL15M"/>
    <property type="match status" value="1"/>
</dbReference>
<dbReference type="Pfam" id="PF00828">
    <property type="entry name" value="Ribosomal_L27A"/>
    <property type="match status" value="1"/>
</dbReference>
<dbReference type="SUPFAM" id="SSF52080">
    <property type="entry name" value="Ribosomal proteins L15p and L18e"/>
    <property type="match status" value="1"/>
</dbReference>
<dbReference type="PROSITE" id="PS00475">
    <property type="entry name" value="RIBOSOMAL_L15"/>
    <property type="match status" value="1"/>
</dbReference>
<gene>
    <name evidence="1" type="primary">rplO</name>
    <name type="ordered locus">Teth39_0392</name>
</gene>
<organism>
    <name type="scientific">Thermoanaerobacter pseudethanolicus (strain ATCC 33223 / 39E)</name>
    <name type="common">Clostridium thermohydrosulfuricum</name>
    <dbReference type="NCBI Taxonomy" id="340099"/>
    <lineage>
        <taxon>Bacteria</taxon>
        <taxon>Bacillati</taxon>
        <taxon>Bacillota</taxon>
        <taxon>Clostridia</taxon>
        <taxon>Thermoanaerobacterales</taxon>
        <taxon>Thermoanaerobacteraceae</taxon>
        <taxon>Thermoanaerobacter</taxon>
    </lineage>
</organism>